<accession>P42570</accession>
<accession>Q9V910</accession>
<evidence type="ECO:0000269" key="1">
    <source>
    </source>
</evidence>
<name>PLU_DROME</name>
<proteinExistence type="evidence at protein level"/>
<reference key="1">
    <citation type="journal article" date="1994" name="EMBO J.">
        <title>The inhibitor of DNA replication encoded by the Drosophila gene plutonium is a small, ankyrin repeat protein.</title>
        <authorList>
            <person name="Axton J.M."/>
            <person name="Shamanski F.L."/>
            <person name="Young L.M."/>
            <person name="Henderson D.S."/>
            <person name="Boyd J.B."/>
            <person name="Orr-Weaver T.L."/>
        </authorList>
    </citation>
    <scope>NUCLEOTIDE SEQUENCE [GENOMIC DNA]</scope>
    <source>
        <strain>Iso-1</strain>
    </source>
</reference>
<reference key="2">
    <citation type="journal article" date="2000" name="Science">
        <title>The genome sequence of Drosophila melanogaster.</title>
        <authorList>
            <person name="Adams M.D."/>
            <person name="Celniker S.E."/>
            <person name="Holt R.A."/>
            <person name="Evans C.A."/>
            <person name="Gocayne J.D."/>
            <person name="Amanatides P.G."/>
            <person name="Scherer S.E."/>
            <person name="Li P.W."/>
            <person name="Hoskins R.A."/>
            <person name="Galle R.F."/>
            <person name="George R.A."/>
            <person name="Lewis S.E."/>
            <person name="Richards S."/>
            <person name="Ashburner M."/>
            <person name="Henderson S.N."/>
            <person name="Sutton G.G."/>
            <person name="Wortman J.R."/>
            <person name="Yandell M.D."/>
            <person name="Zhang Q."/>
            <person name="Chen L.X."/>
            <person name="Brandon R.C."/>
            <person name="Rogers Y.-H.C."/>
            <person name="Blazej R.G."/>
            <person name="Champe M."/>
            <person name="Pfeiffer B.D."/>
            <person name="Wan K.H."/>
            <person name="Doyle C."/>
            <person name="Baxter E.G."/>
            <person name="Helt G."/>
            <person name="Nelson C.R."/>
            <person name="Miklos G.L.G."/>
            <person name="Abril J.F."/>
            <person name="Agbayani A."/>
            <person name="An H.-J."/>
            <person name="Andrews-Pfannkoch C."/>
            <person name="Baldwin D."/>
            <person name="Ballew R.M."/>
            <person name="Basu A."/>
            <person name="Baxendale J."/>
            <person name="Bayraktaroglu L."/>
            <person name="Beasley E.M."/>
            <person name="Beeson K.Y."/>
            <person name="Benos P.V."/>
            <person name="Berman B.P."/>
            <person name="Bhandari D."/>
            <person name="Bolshakov S."/>
            <person name="Borkova D."/>
            <person name="Botchan M.R."/>
            <person name="Bouck J."/>
            <person name="Brokstein P."/>
            <person name="Brottier P."/>
            <person name="Burtis K.C."/>
            <person name="Busam D.A."/>
            <person name="Butler H."/>
            <person name="Cadieu E."/>
            <person name="Center A."/>
            <person name="Chandra I."/>
            <person name="Cherry J.M."/>
            <person name="Cawley S."/>
            <person name="Dahlke C."/>
            <person name="Davenport L.B."/>
            <person name="Davies P."/>
            <person name="de Pablos B."/>
            <person name="Delcher A."/>
            <person name="Deng Z."/>
            <person name="Mays A.D."/>
            <person name="Dew I."/>
            <person name="Dietz S.M."/>
            <person name="Dodson K."/>
            <person name="Doup L.E."/>
            <person name="Downes M."/>
            <person name="Dugan-Rocha S."/>
            <person name="Dunkov B.C."/>
            <person name="Dunn P."/>
            <person name="Durbin K.J."/>
            <person name="Evangelista C.C."/>
            <person name="Ferraz C."/>
            <person name="Ferriera S."/>
            <person name="Fleischmann W."/>
            <person name="Fosler C."/>
            <person name="Gabrielian A.E."/>
            <person name="Garg N.S."/>
            <person name="Gelbart W.M."/>
            <person name="Glasser K."/>
            <person name="Glodek A."/>
            <person name="Gong F."/>
            <person name="Gorrell J.H."/>
            <person name="Gu Z."/>
            <person name="Guan P."/>
            <person name="Harris M."/>
            <person name="Harris N.L."/>
            <person name="Harvey D.A."/>
            <person name="Heiman T.J."/>
            <person name="Hernandez J.R."/>
            <person name="Houck J."/>
            <person name="Hostin D."/>
            <person name="Houston K.A."/>
            <person name="Howland T.J."/>
            <person name="Wei M.-H."/>
            <person name="Ibegwam C."/>
            <person name="Jalali M."/>
            <person name="Kalush F."/>
            <person name="Karpen G.H."/>
            <person name="Ke Z."/>
            <person name="Kennison J.A."/>
            <person name="Ketchum K.A."/>
            <person name="Kimmel B.E."/>
            <person name="Kodira C.D."/>
            <person name="Kraft C.L."/>
            <person name="Kravitz S."/>
            <person name="Kulp D."/>
            <person name="Lai Z."/>
            <person name="Lasko P."/>
            <person name="Lei Y."/>
            <person name="Levitsky A.A."/>
            <person name="Li J.H."/>
            <person name="Li Z."/>
            <person name="Liang Y."/>
            <person name="Lin X."/>
            <person name="Liu X."/>
            <person name="Mattei B."/>
            <person name="McIntosh T.C."/>
            <person name="McLeod M.P."/>
            <person name="McPherson D."/>
            <person name="Merkulov G."/>
            <person name="Milshina N.V."/>
            <person name="Mobarry C."/>
            <person name="Morris J."/>
            <person name="Moshrefi A."/>
            <person name="Mount S.M."/>
            <person name="Moy M."/>
            <person name="Murphy B."/>
            <person name="Murphy L."/>
            <person name="Muzny D.M."/>
            <person name="Nelson D.L."/>
            <person name="Nelson D.R."/>
            <person name="Nelson K.A."/>
            <person name="Nixon K."/>
            <person name="Nusskern D.R."/>
            <person name="Pacleb J.M."/>
            <person name="Palazzolo M."/>
            <person name="Pittman G.S."/>
            <person name="Pan S."/>
            <person name="Pollard J."/>
            <person name="Puri V."/>
            <person name="Reese M.G."/>
            <person name="Reinert K."/>
            <person name="Remington K."/>
            <person name="Saunders R.D.C."/>
            <person name="Scheeler F."/>
            <person name="Shen H."/>
            <person name="Shue B.C."/>
            <person name="Siden-Kiamos I."/>
            <person name="Simpson M."/>
            <person name="Skupski M.P."/>
            <person name="Smith T.J."/>
            <person name="Spier E."/>
            <person name="Spradling A.C."/>
            <person name="Stapleton M."/>
            <person name="Strong R."/>
            <person name="Sun E."/>
            <person name="Svirskas R."/>
            <person name="Tector C."/>
            <person name="Turner R."/>
            <person name="Venter E."/>
            <person name="Wang A.H."/>
            <person name="Wang X."/>
            <person name="Wang Z.-Y."/>
            <person name="Wassarman D.A."/>
            <person name="Weinstock G.M."/>
            <person name="Weissenbach J."/>
            <person name="Williams S.M."/>
            <person name="Woodage T."/>
            <person name="Worley K.C."/>
            <person name="Wu D."/>
            <person name="Yang S."/>
            <person name="Yao Q.A."/>
            <person name="Ye J."/>
            <person name="Yeh R.-F."/>
            <person name="Zaveri J.S."/>
            <person name="Zhan M."/>
            <person name="Zhang G."/>
            <person name="Zhao Q."/>
            <person name="Zheng L."/>
            <person name="Zheng X.H."/>
            <person name="Zhong F.N."/>
            <person name="Zhong W."/>
            <person name="Zhou X."/>
            <person name="Zhu S.C."/>
            <person name="Zhu X."/>
            <person name="Smith H.O."/>
            <person name="Gibbs R.A."/>
            <person name="Myers E.W."/>
            <person name="Rubin G.M."/>
            <person name="Venter J.C."/>
        </authorList>
    </citation>
    <scope>NUCLEOTIDE SEQUENCE [LARGE SCALE GENOMIC DNA]</scope>
    <source>
        <strain>Berkeley</strain>
    </source>
</reference>
<reference key="3">
    <citation type="journal article" date="2002" name="Genome Biol.">
        <title>Annotation of the Drosophila melanogaster euchromatic genome: a systematic review.</title>
        <authorList>
            <person name="Misra S."/>
            <person name="Crosby M.A."/>
            <person name="Mungall C.J."/>
            <person name="Matthews B.B."/>
            <person name="Campbell K.S."/>
            <person name="Hradecky P."/>
            <person name="Huang Y."/>
            <person name="Kaminker J.S."/>
            <person name="Millburn G.H."/>
            <person name="Prochnik S.E."/>
            <person name="Smith C.D."/>
            <person name="Tupy J.L."/>
            <person name="Whitfield E.J."/>
            <person name="Bayraktaroglu L."/>
            <person name="Berman B.P."/>
            <person name="Bettencourt B.R."/>
            <person name="Celniker S.E."/>
            <person name="de Grey A.D.N.J."/>
            <person name="Drysdale R.A."/>
            <person name="Harris N.L."/>
            <person name="Richter J."/>
            <person name="Russo S."/>
            <person name="Schroeder A.J."/>
            <person name="Shu S.Q."/>
            <person name="Stapleton M."/>
            <person name="Yamada C."/>
            <person name="Ashburner M."/>
            <person name="Gelbart W.M."/>
            <person name="Rubin G.M."/>
            <person name="Lewis S.E."/>
        </authorList>
    </citation>
    <scope>GENOME REANNOTATION</scope>
    <source>
        <strain>Berkeley</strain>
    </source>
</reference>
<reference key="4">
    <citation type="journal article" date="2008" name="J. Proteome Res.">
        <title>Phosphoproteome analysis of Drosophila melanogaster embryos.</title>
        <authorList>
            <person name="Zhai B."/>
            <person name="Villen J."/>
            <person name="Beausoleil S.A."/>
            <person name="Mintseris J."/>
            <person name="Gygi S.P."/>
        </authorList>
    </citation>
    <scope>PHOSPHORYLATION [LARGE SCALE ANALYSIS] AT THR-167</scope>
    <scope>IDENTIFICATION BY MASS SPECTROMETRY</scope>
    <source>
        <tissue>Embryo</tissue>
    </source>
</reference>
<dbReference type="EMBL" id="U03986">
    <property type="protein sequence ID" value="AAB60211.1"/>
    <property type="molecule type" value="Genomic_DNA"/>
</dbReference>
<dbReference type="EMBL" id="AE013599">
    <property type="protein sequence ID" value="AAF57492.1"/>
    <property type="molecule type" value="Genomic_DNA"/>
</dbReference>
<dbReference type="PIR" id="S41713">
    <property type="entry name" value="S41713"/>
</dbReference>
<dbReference type="RefSeq" id="NP_476683.1">
    <property type="nucleotide sequence ID" value="NM_057335.3"/>
</dbReference>
<dbReference type="SMR" id="P42570"/>
<dbReference type="BioGRID" id="69325">
    <property type="interactions" value="39"/>
</dbReference>
<dbReference type="DIP" id="DIP-24015N"/>
<dbReference type="FunCoup" id="P42570">
    <property type="interactions" value="2"/>
</dbReference>
<dbReference type="IntAct" id="P42570">
    <property type="interactions" value="1"/>
</dbReference>
<dbReference type="STRING" id="7227.FBpp0085618"/>
<dbReference type="iPTMnet" id="P42570"/>
<dbReference type="PaxDb" id="7227-FBpp0085618"/>
<dbReference type="EnsemblMetazoa" id="FBtr0086306">
    <property type="protein sequence ID" value="FBpp0085618"/>
    <property type="gene ID" value="FBgn0003114"/>
</dbReference>
<dbReference type="GeneID" id="44848"/>
<dbReference type="KEGG" id="dme:Dmel_CG9183"/>
<dbReference type="UCSC" id="CG9183-RA">
    <property type="organism name" value="d. melanogaster"/>
</dbReference>
<dbReference type="AGR" id="FB:FBgn0003114"/>
<dbReference type="CTD" id="44848"/>
<dbReference type="FlyBase" id="FBgn0003114">
    <property type="gene designation" value="plu"/>
</dbReference>
<dbReference type="VEuPathDB" id="VectorBase:FBgn0003114"/>
<dbReference type="eggNOG" id="ENOG502T8DJ">
    <property type="taxonomic scope" value="Eukaryota"/>
</dbReference>
<dbReference type="HOGENOM" id="CLU_1751588_0_0_1"/>
<dbReference type="InParanoid" id="P42570"/>
<dbReference type="OMA" id="MIPALCV"/>
<dbReference type="OrthoDB" id="439236at2759"/>
<dbReference type="PhylomeDB" id="P42570"/>
<dbReference type="SignaLink" id="P42570"/>
<dbReference type="BioGRID-ORCS" id="44848">
    <property type="hits" value="0 hits in 1 CRISPR screen"/>
</dbReference>
<dbReference type="GenomeRNAi" id="44848"/>
<dbReference type="PRO" id="PR:P42570"/>
<dbReference type="Proteomes" id="UP000000803">
    <property type="component" value="Chromosome 2R"/>
</dbReference>
<dbReference type="Bgee" id="FBgn0003114">
    <property type="expression patterns" value="Expressed in secondary oocyte and 17 other cell types or tissues"/>
</dbReference>
<dbReference type="ExpressionAtlas" id="P42570">
    <property type="expression patterns" value="baseline and differential"/>
</dbReference>
<dbReference type="GO" id="GO:1902911">
    <property type="term" value="C:protein kinase complex"/>
    <property type="evidence" value="ECO:0000353"/>
    <property type="project" value="FlyBase"/>
</dbReference>
<dbReference type="GO" id="GO:1902554">
    <property type="term" value="C:serine/threonine protein kinase complex"/>
    <property type="evidence" value="ECO:0000353"/>
    <property type="project" value="FlyBase"/>
</dbReference>
<dbReference type="GO" id="GO:0006260">
    <property type="term" value="P:DNA replication"/>
    <property type="evidence" value="ECO:0007669"/>
    <property type="project" value="UniProtKB-KW"/>
</dbReference>
<dbReference type="GO" id="GO:0007343">
    <property type="term" value="P:egg activation"/>
    <property type="evidence" value="ECO:0000315"/>
    <property type="project" value="FlyBase"/>
</dbReference>
<dbReference type="GO" id="GO:0008156">
    <property type="term" value="P:negative regulation of DNA replication"/>
    <property type="evidence" value="ECO:0000315"/>
    <property type="project" value="FlyBase"/>
</dbReference>
<dbReference type="GO" id="GO:0007346">
    <property type="term" value="P:regulation of mitotic cell cycle"/>
    <property type="evidence" value="ECO:0000304"/>
    <property type="project" value="FlyBase"/>
</dbReference>
<dbReference type="GO" id="GO:0007338">
    <property type="term" value="P:single fertilization"/>
    <property type="evidence" value="ECO:0000315"/>
    <property type="project" value="FlyBase"/>
</dbReference>
<dbReference type="Gene3D" id="1.25.40.20">
    <property type="entry name" value="Ankyrin repeat-containing domain"/>
    <property type="match status" value="1"/>
</dbReference>
<dbReference type="InterPro" id="IPR051631">
    <property type="entry name" value="Ankyrin-KH/SAM_domain"/>
</dbReference>
<dbReference type="InterPro" id="IPR002110">
    <property type="entry name" value="Ankyrin_rpt"/>
</dbReference>
<dbReference type="InterPro" id="IPR036770">
    <property type="entry name" value="Ankyrin_rpt-contain_sf"/>
</dbReference>
<dbReference type="PANTHER" id="PTHR23206:SF8">
    <property type="entry name" value="ANKYRIN REPEAT AND KH DOMAIN-CONTAINING 1"/>
    <property type="match status" value="1"/>
</dbReference>
<dbReference type="PANTHER" id="PTHR23206">
    <property type="entry name" value="MASK PROTEIN"/>
    <property type="match status" value="1"/>
</dbReference>
<dbReference type="Pfam" id="PF12796">
    <property type="entry name" value="Ank_2"/>
    <property type="match status" value="1"/>
</dbReference>
<dbReference type="SMART" id="SM00248">
    <property type="entry name" value="ANK"/>
    <property type="match status" value="2"/>
</dbReference>
<dbReference type="SUPFAM" id="SSF48403">
    <property type="entry name" value="Ankyrin repeat"/>
    <property type="match status" value="1"/>
</dbReference>
<dbReference type="PROSITE" id="PS50297">
    <property type="entry name" value="ANK_REP_REGION"/>
    <property type="match status" value="1"/>
</dbReference>
<dbReference type="PROSITE" id="PS50088">
    <property type="entry name" value="ANK_REPEAT"/>
    <property type="match status" value="1"/>
</dbReference>
<protein>
    <recommendedName>
        <fullName>DNA replication inhibitor plutonium</fullName>
    </recommendedName>
</protein>
<gene>
    <name type="primary">plu</name>
    <name type="ORF">CG9183</name>
</gene>
<comment type="function">
    <text>Inhibits DNA replication early in developments. May bind and block the action of a replication or initiation factor.</text>
</comment>
<keyword id="KW-0040">ANK repeat</keyword>
<keyword id="KW-0235">DNA replication</keyword>
<keyword id="KW-0597">Phosphoprotein</keyword>
<keyword id="KW-1185">Reference proteome</keyword>
<keyword id="KW-0677">Repeat</keyword>
<sequence length="174" mass="19319">MGEINALSCVGQDDVVSLRIVCTMARDGKQHNLEDVDMYGNTALLKACYLGRFECARTLLEFGANIFAMNYFGQNALTLATYAGHLTLVKELLRRRSYKDFNLSSMIPALCVATLQKHSALVAYFTQLDSRGVQETQTVHGLGVAELRGMIKAAGRLDKRNVRSPPTFISNRLR</sequence>
<organism>
    <name type="scientific">Drosophila melanogaster</name>
    <name type="common">Fruit fly</name>
    <dbReference type="NCBI Taxonomy" id="7227"/>
    <lineage>
        <taxon>Eukaryota</taxon>
        <taxon>Metazoa</taxon>
        <taxon>Ecdysozoa</taxon>
        <taxon>Arthropoda</taxon>
        <taxon>Hexapoda</taxon>
        <taxon>Insecta</taxon>
        <taxon>Pterygota</taxon>
        <taxon>Neoptera</taxon>
        <taxon>Endopterygota</taxon>
        <taxon>Diptera</taxon>
        <taxon>Brachycera</taxon>
        <taxon>Muscomorpha</taxon>
        <taxon>Ephydroidea</taxon>
        <taxon>Drosophilidae</taxon>
        <taxon>Drosophila</taxon>
        <taxon>Sophophora</taxon>
    </lineage>
</organism>
<feature type="chain" id="PRO_0000067057" description="DNA replication inhibitor plutonium">
    <location>
        <begin position="1"/>
        <end position="174"/>
    </location>
</feature>
<feature type="repeat" description="ANK 1">
    <location>
        <begin position="39"/>
        <end position="68"/>
    </location>
</feature>
<feature type="repeat" description="ANK 2">
    <location>
        <begin position="72"/>
        <end position="103"/>
    </location>
</feature>
<feature type="modified residue" description="Phosphothreonine" evidence="1">
    <location>
        <position position="167"/>
    </location>
</feature>
<feature type="sequence variant">
    <original>S</original>
    <variation>W</variation>
    <location>
        <position position="97"/>
    </location>
</feature>